<dbReference type="EMBL" id="BC121375">
    <property type="protein sequence ID" value="AAI21376.1"/>
    <property type="molecule type" value="mRNA"/>
</dbReference>
<dbReference type="RefSeq" id="NP_001072899.1">
    <molecule id="Q0V9V9-2"/>
    <property type="nucleotide sequence ID" value="NM_001079431.1"/>
</dbReference>
<dbReference type="RefSeq" id="XP_012822220.1">
    <molecule id="Q0V9V9-1"/>
    <property type="nucleotide sequence ID" value="XM_012966766.3"/>
</dbReference>
<dbReference type="SMR" id="Q0V9V9"/>
<dbReference type="FunCoup" id="Q0V9V9">
    <property type="interactions" value="753"/>
</dbReference>
<dbReference type="GlyCosmos" id="Q0V9V9">
    <property type="glycosylation" value="3 sites, No reported glycans"/>
</dbReference>
<dbReference type="PaxDb" id="8364-ENSXETP00000022826"/>
<dbReference type="DNASU" id="780361"/>
<dbReference type="GeneID" id="780361"/>
<dbReference type="KEGG" id="xtr:780361"/>
<dbReference type="AGR" id="Xenbase:XB-GENE-940450"/>
<dbReference type="CTD" id="57348"/>
<dbReference type="Xenbase" id="XB-GENE-940450">
    <property type="gene designation" value="ttyh1"/>
</dbReference>
<dbReference type="eggNOG" id="KOG4433">
    <property type="taxonomic scope" value="Eukaryota"/>
</dbReference>
<dbReference type="InParanoid" id="Q0V9V9"/>
<dbReference type="OMA" id="ASYIEYY"/>
<dbReference type="OrthoDB" id="187568at2759"/>
<dbReference type="Reactome" id="R-XTR-2672351">
    <property type="pathway name" value="Stimuli-sensing channels"/>
</dbReference>
<dbReference type="Proteomes" id="UP000008143">
    <property type="component" value="Chromosome 7"/>
</dbReference>
<dbReference type="Bgee" id="ENSXETG00000003389">
    <property type="expression patterns" value="Expressed in brain and 9 other cell types or tissues"/>
</dbReference>
<dbReference type="GO" id="GO:0034707">
    <property type="term" value="C:chloride channel complex"/>
    <property type="evidence" value="ECO:0007669"/>
    <property type="project" value="UniProtKB-KW"/>
</dbReference>
<dbReference type="GO" id="GO:0005886">
    <property type="term" value="C:plasma membrane"/>
    <property type="evidence" value="ECO:0000250"/>
    <property type="project" value="UniProtKB"/>
</dbReference>
<dbReference type="GO" id="GO:0072320">
    <property type="term" value="F:volume-sensitive chloride channel activity"/>
    <property type="evidence" value="ECO:0000250"/>
    <property type="project" value="UniProtKB"/>
</dbReference>
<dbReference type="GO" id="GO:0015813">
    <property type="term" value="P:L-glutamate transmembrane transport"/>
    <property type="evidence" value="ECO:0000250"/>
    <property type="project" value="UniProtKB"/>
</dbReference>
<dbReference type="CDD" id="cd07912">
    <property type="entry name" value="Tweety_N"/>
    <property type="match status" value="1"/>
</dbReference>
<dbReference type="InterPro" id="IPR006990">
    <property type="entry name" value="Tweety"/>
</dbReference>
<dbReference type="PANTHER" id="PTHR12424:SF5">
    <property type="entry name" value="PROTEIN TWEETY HOMOLOG 1"/>
    <property type="match status" value="1"/>
</dbReference>
<dbReference type="PANTHER" id="PTHR12424">
    <property type="entry name" value="TWEETY-RELATED"/>
    <property type="match status" value="1"/>
</dbReference>
<dbReference type="Pfam" id="PF04906">
    <property type="entry name" value="Tweety"/>
    <property type="match status" value="1"/>
</dbReference>
<name>TTYH1_XENTR</name>
<comment type="function">
    <text evidence="1">May act as a calcium-independent, swelling-dependent volume-regulated anion channel (VRAC-swell) which plays a pivotal role in the process of regulatory volume decrease (RVD) in the brain through the efflux of anions like chloride and organic osmolytes like glutamate.</text>
</comment>
<comment type="catalytic activity">
    <reaction evidence="1">
        <text>chloride(in) = chloride(out)</text>
        <dbReference type="Rhea" id="RHEA:29823"/>
        <dbReference type="ChEBI" id="CHEBI:17996"/>
    </reaction>
</comment>
<comment type="catalytic activity">
    <reaction evidence="1">
        <text>L-glutamate(out) = L-glutamate(in)</text>
        <dbReference type="Rhea" id="RHEA:66336"/>
        <dbReference type="ChEBI" id="CHEBI:29985"/>
    </reaction>
    <physiologicalReaction direction="right-to-left" evidence="1">
        <dbReference type="Rhea" id="RHEA:66338"/>
    </physiologicalReaction>
</comment>
<comment type="subunit">
    <text evidence="1 2">Homotetramer; disulfide-linked. Homodimer.</text>
</comment>
<comment type="subcellular location">
    <subcellularLocation>
        <location evidence="1">Cell membrane</location>
        <topology evidence="3">Multi-pass membrane protein</topology>
    </subcellularLocation>
</comment>
<comment type="alternative products">
    <event type="alternative splicing"/>
    <isoform>
        <id>Q0V9V9-1</id>
        <name>1</name>
        <sequence type="displayed"/>
    </isoform>
    <isoform>
        <id>Q0V9V9-2</id>
        <name>2</name>
        <sequence type="described" ref="VSP_029767"/>
    </isoform>
</comment>
<comment type="similarity">
    <text evidence="5">Belongs to the tweety family.</text>
</comment>
<sequence>MSSSHGYRASWWTYILHQVPHTNFQFEVVDNQFAPQEWPYQQALLFLASIAGLCLAISLILICVYLIRFCCCSSQEDDDSKSHRVCCVTWSCVAAVIICCAGIGIGFYGNSETNDGVYQVTYSLMNANHTLTSINLLISDTVELLSSVVRSDLTQLEEIFSKRTEFLVMIRNTRRQVESVAQQLAEISFWKGPEPNPNALAEQVNFIEDYRWLAYILLLLLDLIICLFTLLGLAKQIKWLVIVMTVVSFFVLLLSWGSMGLEMATAVGLSDFCSDPDAYVMNQTQAITNINPDILQYYISCNQDVTNPFRQRLTMSQRALSNIHSQLHGLEREAVPQFPTAEKNLLVVQGMLNTTEGNFHHLVALLNCRGLHKDYVDALKGLCYDGMEGILFLLLFSFLSALSFTAAICSLPRAWKRFQNRDLDYDDMDEDDPFNPQESKRFVQWQSSI</sequence>
<gene>
    <name type="primary">ttyh1</name>
</gene>
<proteinExistence type="evidence at transcript level"/>
<feature type="chain" id="PRO_0000312245" description="Protein tweety homolog 1">
    <location>
        <begin position="1"/>
        <end position="449"/>
    </location>
</feature>
<feature type="topological domain" description="Extracellular" evidence="2">
    <location>
        <begin position="1"/>
        <end position="43"/>
    </location>
</feature>
<feature type="transmembrane region" description="Helical; Name=1" evidence="3">
    <location>
        <begin position="44"/>
        <end position="64"/>
    </location>
</feature>
<feature type="topological domain" description="Cytoplasmic" evidence="2">
    <location>
        <begin position="65"/>
        <end position="86"/>
    </location>
</feature>
<feature type="transmembrane region" description="Helical; Name=2" evidence="3">
    <location>
        <begin position="87"/>
        <end position="107"/>
    </location>
</feature>
<feature type="topological domain" description="Extracellular" evidence="2">
    <location>
        <begin position="108"/>
        <end position="212"/>
    </location>
</feature>
<feature type="transmembrane region" description="Helical; Name=3" evidence="3">
    <location>
        <begin position="213"/>
        <end position="233"/>
    </location>
</feature>
<feature type="topological domain" description="Cytoplasmic" evidence="2">
    <location>
        <begin position="234"/>
        <end position="238"/>
    </location>
</feature>
<feature type="transmembrane region" description="Helical; Name=4" evidence="3">
    <location>
        <begin position="239"/>
        <end position="259"/>
    </location>
</feature>
<feature type="topological domain" description="Extracellular" evidence="2">
    <location>
        <begin position="260"/>
        <end position="388"/>
    </location>
</feature>
<feature type="transmembrane region" description="Helical; Name=5" evidence="3">
    <location>
        <begin position="389"/>
        <end position="409"/>
    </location>
</feature>
<feature type="topological domain" description="Cytoplasmic" evidence="2">
    <location>
        <begin position="410"/>
        <end position="449"/>
    </location>
</feature>
<feature type="site" description="Essential for the formation of the channel-pore" evidence="1">
    <location>
        <position position="163"/>
    </location>
</feature>
<feature type="glycosylation site" description="N-linked (GlcNAc...) asparagine" evidence="3">
    <location>
        <position position="128"/>
    </location>
</feature>
<feature type="glycosylation site" description="N-linked (GlcNAc...) asparagine" evidence="3">
    <location>
        <position position="282"/>
    </location>
</feature>
<feature type="glycosylation site" description="N-linked (GlcNAc...) asparagine" evidence="3">
    <location>
        <position position="353"/>
    </location>
</feature>
<feature type="disulfide bond" evidence="2">
    <location>
        <begin position="273"/>
        <end position="383"/>
    </location>
</feature>
<feature type="disulfide bond" evidence="2">
    <location>
        <begin position="301"/>
        <end position="368"/>
    </location>
</feature>
<feature type="splice variant" id="VSP_029767" description="In isoform 2." evidence="4">
    <original>ESKRFVQWQSSI</original>
    <variation>ARREMLHVTGRPHLPSFYSYSSSCDSHSSLRVSAPPISNAPVSQYMNQSALSSGNPRFENIPLIDRQSPPPSYSPSMRTSFISATQEETDTPCRTDVAF</variation>
    <location>
        <begin position="438"/>
        <end position="449"/>
    </location>
</feature>
<reference key="1">
    <citation type="submission" date="2006-08" db="EMBL/GenBank/DDBJ databases">
        <authorList>
            <consortium name="NIH - Xenopus Gene Collection (XGC) project"/>
        </authorList>
    </citation>
    <scope>NUCLEOTIDE SEQUENCE [LARGE SCALE MRNA] (ISOFORM 2)</scope>
    <source>
        <tissue>Brain</tissue>
    </source>
</reference>
<evidence type="ECO:0000250" key="1">
    <source>
        <dbReference type="UniProtKB" id="Q9D3A9"/>
    </source>
</evidence>
<evidence type="ECO:0000250" key="2">
    <source>
        <dbReference type="UniProtKB" id="Q9H313"/>
    </source>
</evidence>
<evidence type="ECO:0000255" key="3"/>
<evidence type="ECO:0000303" key="4">
    <source ref="1"/>
</evidence>
<evidence type="ECO:0000305" key="5"/>
<organism>
    <name type="scientific">Xenopus tropicalis</name>
    <name type="common">Western clawed frog</name>
    <name type="synonym">Silurana tropicalis</name>
    <dbReference type="NCBI Taxonomy" id="8364"/>
    <lineage>
        <taxon>Eukaryota</taxon>
        <taxon>Metazoa</taxon>
        <taxon>Chordata</taxon>
        <taxon>Craniata</taxon>
        <taxon>Vertebrata</taxon>
        <taxon>Euteleostomi</taxon>
        <taxon>Amphibia</taxon>
        <taxon>Batrachia</taxon>
        <taxon>Anura</taxon>
        <taxon>Pipoidea</taxon>
        <taxon>Pipidae</taxon>
        <taxon>Xenopodinae</taxon>
        <taxon>Xenopus</taxon>
        <taxon>Silurana</taxon>
    </lineage>
</organism>
<keyword id="KW-0025">Alternative splicing</keyword>
<keyword id="KW-1003">Cell membrane</keyword>
<keyword id="KW-0868">Chloride</keyword>
<keyword id="KW-0869">Chloride channel</keyword>
<keyword id="KW-1015">Disulfide bond</keyword>
<keyword id="KW-0325">Glycoprotein</keyword>
<keyword id="KW-0407">Ion channel</keyword>
<keyword id="KW-0406">Ion transport</keyword>
<keyword id="KW-0472">Membrane</keyword>
<keyword id="KW-1185">Reference proteome</keyword>
<keyword id="KW-0812">Transmembrane</keyword>
<keyword id="KW-1133">Transmembrane helix</keyword>
<keyword id="KW-0813">Transport</keyword>
<protein>
    <recommendedName>
        <fullName>Protein tweety homolog 1</fullName>
    </recommendedName>
    <alternativeName>
        <fullName evidence="1">Volume-regulated anion channel subunit ttyh1</fullName>
    </alternativeName>
</protein>
<accession>Q0V9V9</accession>